<comment type="function">
    <text evidence="1">Protamines substitute for histones in the chromatin of sperm during the haploid phase of spermatogenesis. They compact sperm DNA into a highly condensed, stable and inactive complex (By similarity).</text>
</comment>
<comment type="subcellular location">
    <subcellularLocation>
        <location evidence="1">Nucleus</location>
    </subcellularLocation>
    <subcellularLocation>
        <location evidence="1">Chromosome</location>
    </subcellularLocation>
</comment>
<comment type="tissue specificity">
    <text>Testis.</text>
</comment>
<comment type="similarity">
    <text evidence="2">Belongs to the protamine P1 family.</text>
</comment>
<protein>
    <recommendedName>
        <fullName>Sperm protamine P1</fullName>
    </recommendedName>
</protein>
<accession>Q8WNZ3</accession>
<dbReference type="EMBL" id="AF435937">
    <property type="protein sequence ID" value="AAL35571.1"/>
    <property type="molecule type" value="Genomic_DNA"/>
</dbReference>
<dbReference type="GO" id="GO:0000786">
    <property type="term" value="C:nucleosome"/>
    <property type="evidence" value="ECO:0007669"/>
    <property type="project" value="UniProtKB-KW"/>
</dbReference>
<dbReference type="GO" id="GO:0005634">
    <property type="term" value="C:nucleus"/>
    <property type="evidence" value="ECO:0007669"/>
    <property type="project" value="UniProtKB-SubCell"/>
</dbReference>
<dbReference type="GO" id="GO:0003677">
    <property type="term" value="F:DNA binding"/>
    <property type="evidence" value="ECO:0007669"/>
    <property type="project" value="UniProtKB-KW"/>
</dbReference>
<dbReference type="GO" id="GO:0030261">
    <property type="term" value="P:chromosome condensation"/>
    <property type="evidence" value="ECO:0007669"/>
    <property type="project" value="UniProtKB-KW"/>
</dbReference>
<dbReference type="GO" id="GO:0035092">
    <property type="term" value="P:sperm DNA condensation"/>
    <property type="evidence" value="ECO:0007669"/>
    <property type="project" value="InterPro"/>
</dbReference>
<dbReference type="InterPro" id="IPR000221">
    <property type="entry name" value="Protamine_P1"/>
</dbReference>
<dbReference type="Pfam" id="PF00260">
    <property type="entry name" value="Protamine_P1"/>
    <property type="match status" value="1"/>
</dbReference>
<dbReference type="PROSITE" id="PS00048">
    <property type="entry name" value="PROTAMINE_P1"/>
    <property type="match status" value="1"/>
</dbReference>
<name>HSP1_NATST</name>
<organism>
    <name type="scientific">Natalus stramineus</name>
    <name type="common">Mexican funnel-eared bat</name>
    <dbReference type="NCBI Taxonomy" id="155040"/>
    <lineage>
        <taxon>Eukaryota</taxon>
        <taxon>Metazoa</taxon>
        <taxon>Chordata</taxon>
        <taxon>Craniata</taxon>
        <taxon>Vertebrata</taxon>
        <taxon>Euteleostomi</taxon>
        <taxon>Mammalia</taxon>
        <taxon>Eutheria</taxon>
        <taxon>Laurasiatheria</taxon>
        <taxon>Chiroptera</taxon>
        <taxon>Yangochiroptera</taxon>
        <taxon>Natalidae</taxon>
        <taxon>Natalus</taxon>
    </lineage>
</organism>
<sequence length="50" mass="6678">MARYRCCRSQSRSRCRPRRRRCRTRRRRCCRRRRRRVCCRRYTVVRCRRR</sequence>
<feature type="chain" id="PRO_0000191508" description="Sperm protamine P1">
    <location>
        <begin position="1"/>
        <end position="50"/>
    </location>
</feature>
<proteinExistence type="evidence at transcript level"/>
<reference key="1">
    <citation type="journal article" date="2002" name="Mol. Phylogenet. Evol.">
        <title>Characterization and phylogenetic utility of the mammalian protamine P1 gene.</title>
        <authorList>
            <person name="Van Den Bussche R.A."/>
            <person name="Hoofer S.R."/>
            <person name="Hansen E.W."/>
        </authorList>
    </citation>
    <scope>NUCLEOTIDE SEQUENCE [GENOMIC DNA]</scope>
</reference>
<keyword id="KW-0158">Chromosome</keyword>
<keyword id="KW-0217">Developmental protein</keyword>
<keyword id="KW-0221">Differentiation</keyword>
<keyword id="KW-0226">DNA condensation</keyword>
<keyword id="KW-0238">DNA-binding</keyword>
<keyword id="KW-0544">Nucleosome core</keyword>
<keyword id="KW-0539">Nucleus</keyword>
<keyword id="KW-0744">Spermatogenesis</keyword>
<gene>
    <name type="primary">PRM1</name>
</gene>
<evidence type="ECO:0000250" key="1"/>
<evidence type="ECO:0000305" key="2"/>